<keyword id="KW-0004">4Fe-4S</keyword>
<keyword id="KW-0028">Amino-acid biosynthesis</keyword>
<keyword id="KW-0198">Cysteine biosynthesis</keyword>
<keyword id="KW-0349">Heme</keyword>
<keyword id="KW-0408">Iron</keyword>
<keyword id="KW-0411">Iron-sulfur</keyword>
<keyword id="KW-0479">Metal-binding</keyword>
<keyword id="KW-0521">NADP</keyword>
<keyword id="KW-0560">Oxidoreductase</keyword>
<accession>B7VI85</accession>
<comment type="function">
    <text evidence="1">Component of the sulfite reductase complex that catalyzes the 6-electron reduction of sulfite to sulfide. This is one of several activities required for the biosynthesis of L-cysteine from sulfate.</text>
</comment>
<comment type="catalytic activity">
    <reaction evidence="1">
        <text>hydrogen sulfide + 3 NADP(+) + 3 H2O = sulfite + 3 NADPH + 4 H(+)</text>
        <dbReference type="Rhea" id="RHEA:13801"/>
        <dbReference type="ChEBI" id="CHEBI:15377"/>
        <dbReference type="ChEBI" id="CHEBI:15378"/>
        <dbReference type="ChEBI" id="CHEBI:17359"/>
        <dbReference type="ChEBI" id="CHEBI:29919"/>
        <dbReference type="ChEBI" id="CHEBI:57783"/>
        <dbReference type="ChEBI" id="CHEBI:58349"/>
        <dbReference type="EC" id="1.8.1.2"/>
    </reaction>
</comment>
<comment type="cofactor">
    <cofactor evidence="1">
        <name>siroheme</name>
        <dbReference type="ChEBI" id="CHEBI:60052"/>
    </cofactor>
    <text evidence="1">Binds 1 siroheme per subunit.</text>
</comment>
<comment type="cofactor">
    <cofactor evidence="1">
        <name>[4Fe-4S] cluster</name>
        <dbReference type="ChEBI" id="CHEBI:49883"/>
    </cofactor>
    <text evidence="1">Binds 1 [4Fe-4S] cluster per subunit.</text>
</comment>
<comment type="pathway">
    <text evidence="1">Sulfur metabolism; hydrogen sulfide biosynthesis; hydrogen sulfide from sulfite (NADPH route): step 1/1.</text>
</comment>
<comment type="subunit">
    <text evidence="1">Alpha(8)-beta(8). The alpha component is a flavoprotein, the beta component is a hemoprotein.</text>
</comment>
<comment type="similarity">
    <text evidence="1">Belongs to the nitrite and sulfite reductase 4Fe-4S domain family.</text>
</comment>
<sequence>MSKQVIEQEVLGQVLGPLADNERLKRESKNLRGTIEQDLEDRITGGFTADNFQLIRFHGMYQQDDRDIRNERTKQKLEPLHNVMLRARMPGGIITPKQWLAIDKFADESTSYGSIRLTTRQTFQFHGVLKPNIKLMHQTLNSIGIDSIATAGDVNRNVLCTTNPVESELHQEAYEWAKKISEHLLPKTRAYAEIWLDGEKLATTDEEPILGSNYLPRKFKTTVVIPPQNDVDVHANDLNFIAIAKDGKLVGFNVLVGGGLAMTHGDTSTYARKADDFGFVPLEKTLDVAAAVVTTQRDWGNRSNRKNAKTKYTLDRVGIDVFKAEVEKRAGVEFAESRPYEFTGRGDRIGWAEGIDGKHHLALFIENGRLLDFPGKALKTGVAEIAKIHKGDFRMTANQNLIVAGVLKSQKAQIEKLARQYGLMDDAVSEQRKNSMACVAFPTCPLAMAEAERFLPEFVTDVEDILKKHGLPEEDNIILRITGCPNGCGRAMLAELGLVGKAPGRYNMHLGGNKAGTRIPKMYKENITSAQILEEIDSLVGRWATERTDNEGFGDFTIRAGIIEEVIISKRDLHA</sequence>
<organism>
    <name type="scientific">Vibrio atlanticus (strain LGP32)</name>
    <name type="common">Vibrio splendidus (strain Mel32)</name>
    <dbReference type="NCBI Taxonomy" id="575788"/>
    <lineage>
        <taxon>Bacteria</taxon>
        <taxon>Pseudomonadati</taxon>
        <taxon>Pseudomonadota</taxon>
        <taxon>Gammaproteobacteria</taxon>
        <taxon>Vibrionales</taxon>
        <taxon>Vibrionaceae</taxon>
        <taxon>Vibrio</taxon>
    </lineage>
</organism>
<dbReference type="EC" id="1.8.1.2" evidence="1"/>
<dbReference type="EMBL" id="FM954972">
    <property type="protein sequence ID" value="CAV17322.1"/>
    <property type="molecule type" value="Genomic_DNA"/>
</dbReference>
<dbReference type="SMR" id="B7VI85"/>
<dbReference type="STRING" id="575788.VS_0300"/>
<dbReference type="KEGG" id="vsp:VS_0300"/>
<dbReference type="PATRIC" id="fig|575788.5.peg.1679"/>
<dbReference type="eggNOG" id="COG0155">
    <property type="taxonomic scope" value="Bacteria"/>
</dbReference>
<dbReference type="HOGENOM" id="CLU_001975_3_2_6"/>
<dbReference type="UniPathway" id="UPA00140">
    <property type="reaction ID" value="UER00207"/>
</dbReference>
<dbReference type="Proteomes" id="UP000009100">
    <property type="component" value="Chromosome 1"/>
</dbReference>
<dbReference type="GO" id="GO:0009337">
    <property type="term" value="C:sulfite reductase complex (NADPH)"/>
    <property type="evidence" value="ECO:0007669"/>
    <property type="project" value="InterPro"/>
</dbReference>
<dbReference type="GO" id="GO:0051539">
    <property type="term" value="F:4 iron, 4 sulfur cluster binding"/>
    <property type="evidence" value="ECO:0007669"/>
    <property type="project" value="UniProtKB-KW"/>
</dbReference>
<dbReference type="GO" id="GO:0020037">
    <property type="term" value="F:heme binding"/>
    <property type="evidence" value="ECO:0007669"/>
    <property type="project" value="InterPro"/>
</dbReference>
<dbReference type="GO" id="GO:0046872">
    <property type="term" value="F:metal ion binding"/>
    <property type="evidence" value="ECO:0007669"/>
    <property type="project" value="UniProtKB-KW"/>
</dbReference>
<dbReference type="GO" id="GO:0050661">
    <property type="term" value="F:NADP binding"/>
    <property type="evidence" value="ECO:0007669"/>
    <property type="project" value="InterPro"/>
</dbReference>
<dbReference type="GO" id="GO:0050311">
    <property type="term" value="F:sulfite reductase (ferredoxin) activity"/>
    <property type="evidence" value="ECO:0007669"/>
    <property type="project" value="TreeGrafter"/>
</dbReference>
<dbReference type="GO" id="GO:0004783">
    <property type="term" value="F:sulfite reductase (NADPH) activity"/>
    <property type="evidence" value="ECO:0007669"/>
    <property type="project" value="UniProtKB-UniRule"/>
</dbReference>
<dbReference type="GO" id="GO:0019344">
    <property type="term" value="P:cysteine biosynthetic process"/>
    <property type="evidence" value="ECO:0007669"/>
    <property type="project" value="UniProtKB-KW"/>
</dbReference>
<dbReference type="GO" id="GO:0070814">
    <property type="term" value="P:hydrogen sulfide biosynthetic process"/>
    <property type="evidence" value="ECO:0007669"/>
    <property type="project" value="UniProtKB-UniRule"/>
</dbReference>
<dbReference type="GO" id="GO:0000103">
    <property type="term" value="P:sulfate assimilation"/>
    <property type="evidence" value="ECO:0007669"/>
    <property type="project" value="UniProtKB-UniRule"/>
</dbReference>
<dbReference type="FunFam" id="3.30.413.10:FF:000003">
    <property type="entry name" value="Sulfite reductase [NADPH] hemoprotein beta-component"/>
    <property type="match status" value="1"/>
</dbReference>
<dbReference type="FunFam" id="3.30.413.10:FF:000004">
    <property type="entry name" value="Sulfite reductase [NADPH] hemoprotein beta-component"/>
    <property type="match status" value="1"/>
</dbReference>
<dbReference type="Gene3D" id="3.30.413.10">
    <property type="entry name" value="Sulfite Reductase Hemoprotein, domain 1"/>
    <property type="match status" value="2"/>
</dbReference>
<dbReference type="HAMAP" id="MF_01540">
    <property type="entry name" value="CysI"/>
    <property type="match status" value="1"/>
</dbReference>
<dbReference type="InterPro" id="IPR011786">
    <property type="entry name" value="CysI"/>
</dbReference>
<dbReference type="InterPro" id="IPR005117">
    <property type="entry name" value="NiRdtase/SiRdtase_haem-b_fer"/>
</dbReference>
<dbReference type="InterPro" id="IPR036136">
    <property type="entry name" value="Nit/Sulf_reduc_fer-like_dom_sf"/>
</dbReference>
<dbReference type="InterPro" id="IPR006067">
    <property type="entry name" value="NO2/SO3_Rdtase_4Fe4S_dom"/>
</dbReference>
<dbReference type="InterPro" id="IPR045169">
    <property type="entry name" value="NO2/SO3_Rdtase_4Fe4S_prot"/>
</dbReference>
<dbReference type="InterPro" id="IPR045854">
    <property type="entry name" value="NO2/SO3_Rdtase_4Fe4S_sf"/>
</dbReference>
<dbReference type="InterPro" id="IPR006066">
    <property type="entry name" value="NO2/SO3_Rdtase_FeS/sirohaem_BS"/>
</dbReference>
<dbReference type="NCBIfam" id="TIGR02041">
    <property type="entry name" value="CysI"/>
    <property type="match status" value="1"/>
</dbReference>
<dbReference type="NCBIfam" id="NF010029">
    <property type="entry name" value="PRK13504.1"/>
    <property type="match status" value="1"/>
</dbReference>
<dbReference type="PANTHER" id="PTHR11493:SF47">
    <property type="entry name" value="SULFITE REDUCTASE [NADPH] SUBUNIT BETA"/>
    <property type="match status" value="1"/>
</dbReference>
<dbReference type="PANTHER" id="PTHR11493">
    <property type="entry name" value="SULFITE REDUCTASE [NADPH] SUBUNIT BETA-RELATED"/>
    <property type="match status" value="1"/>
</dbReference>
<dbReference type="Pfam" id="PF01077">
    <property type="entry name" value="NIR_SIR"/>
    <property type="match status" value="1"/>
</dbReference>
<dbReference type="Pfam" id="PF03460">
    <property type="entry name" value="NIR_SIR_ferr"/>
    <property type="match status" value="2"/>
</dbReference>
<dbReference type="PRINTS" id="PR00397">
    <property type="entry name" value="SIROHAEM"/>
</dbReference>
<dbReference type="SUPFAM" id="SSF56014">
    <property type="entry name" value="Nitrite and sulphite reductase 4Fe-4S domain-like"/>
    <property type="match status" value="2"/>
</dbReference>
<dbReference type="SUPFAM" id="SSF55124">
    <property type="entry name" value="Nitrite/Sulfite reductase N-terminal domain-like"/>
    <property type="match status" value="2"/>
</dbReference>
<dbReference type="PROSITE" id="PS00365">
    <property type="entry name" value="NIR_SIR"/>
    <property type="match status" value="1"/>
</dbReference>
<name>CYSI_VIBA3</name>
<protein>
    <recommendedName>
        <fullName evidence="1">Sulfite reductase [NADPH] hemoprotein beta-component</fullName>
        <shortName evidence="1">SiR-HP</shortName>
        <shortName evidence="1">SiRHP</shortName>
        <ecNumber evidence="1">1.8.1.2</ecNumber>
    </recommendedName>
</protein>
<gene>
    <name evidence="1" type="primary">cysI</name>
    <name type="ordered locus">VS_0300</name>
</gene>
<evidence type="ECO:0000255" key="1">
    <source>
        <dbReference type="HAMAP-Rule" id="MF_01540"/>
    </source>
</evidence>
<feature type="chain" id="PRO_0000388526" description="Sulfite reductase [NADPH] hemoprotein beta-component">
    <location>
        <begin position="1"/>
        <end position="575"/>
    </location>
</feature>
<feature type="binding site" evidence="1">
    <location>
        <position position="438"/>
    </location>
    <ligand>
        <name>[4Fe-4S] cluster</name>
        <dbReference type="ChEBI" id="CHEBI:49883"/>
    </ligand>
</feature>
<feature type="binding site" evidence="1">
    <location>
        <position position="444"/>
    </location>
    <ligand>
        <name>[4Fe-4S] cluster</name>
        <dbReference type="ChEBI" id="CHEBI:49883"/>
    </ligand>
</feature>
<feature type="binding site" evidence="1">
    <location>
        <position position="484"/>
    </location>
    <ligand>
        <name>[4Fe-4S] cluster</name>
        <dbReference type="ChEBI" id="CHEBI:49883"/>
    </ligand>
</feature>
<feature type="binding site" evidence="1">
    <location>
        <position position="488"/>
    </location>
    <ligand>
        <name>[4Fe-4S] cluster</name>
        <dbReference type="ChEBI" id="CHEBI:49883"/>
    </ligand>
</feature>
<feature type="binding site" description="axial binding residue" evidence="1">
    <location>
        <position position="488"/>
    </location>
    <ligand>
        <name>siroheme</name>
        <dbReference type="ChEBI" id="CHEBI:60052"/>
    </ligand>
    <ligandPart>
        <name>Fe</name>
        <dbReference type="ChEBI" id="CHEBI:18248"/>
    </ligandPart>
</feature>
<reference key="1">
    <citation type="submission" date="2009-02" db="EMBL/GenBank/DDBJ databases">
        <title>Vibrio splendidus str. LGP32 complete genome.</title>
        <authorList>
            <person name="Mazel D."/>
            <person name="Le Roux F."/>
        </authorList>
    </citation>
    <scope>NUCLEOTIDE SEQUENCE [LARGE SCALE GENOMIC DNA]</scope>
    <source>
        <strain>LGP32</strain>
    </source>
</reference>
<proteinExistence type="inferred from homology"/>